<comment type="function">
    <text>The muscarinic acetylcholine receptor mediates various cellular responses, including inhibition of adenylate cyclase, breakdown of phosphoinositides and modulation of potassium channels through the action of G proteins. Primary transducing effect is Pi turnover.</text>
</comment>
<comment type="subcellular location">
    <subcellularLocation>
        <location evidence="2">Cell membrane</location>
        <topology evidence="3">Multi-pass membrane protein</topology>
    </subcellularLocation>
    <subcellularLocation>
        <location>Postsynaptic cell membrane</location>
        <topology evidence="3">Multi-pass membrane protein</topology>
    </subcellularLocation>
</comment>
<comment type="tissue specificity">
    <text>Brain, heart atria, and ventricle.</text>
</comment>
<comment type="similarity">
    <text evidence="4">Belongs to the G-protein coupled receptor 1 family. Muscarinic acetylcholine receptor subfamily. CHRM3 sub-subfamily.</text>
</comment>
<proteinExistence type="evidence at transcript level"/>
<organism>
    <name type="scientific">Gallus gallus</name>
    <name type="common">Chicken</name>
    <dbReference type="NCBI Taxonomy" id="9031"/>
    <lineage>
        <taxon>Eukaryota</taxon>
        <taxon>Metazoa</taxon>
        <taxon>Chordata</taxon>
        <taxon>Craniata</taxon>
        <taxon>Vertebrata</taxon>
        <taxon>Euteleostomi</taxon>
        <taxon>Archelosauria</taxon>
        <taxon>Archosauria</taxon>
        <taxon>Dinosauria</taxon>
        <taxon>Saurischia</taxon>
        <taxon>Theropoda</taxon>
        <taxon>Coelurosauria</taxon>
        <taxon>Aves</taxon>
        <taxon>Neognathae</taxon>
        <taxon>Galloanserae</taxon>
        <taxon>Galliformes</taxon>
        <taxon>Phasianidae</taxon>
        <taxon>Phasianinae</taxon>
        <taxon>Gallus</taxon>
    </lineage>
</organism>
<keyword id="KW-1003">Cell membrane</keyword>
<keyword id="KW-1015">Disulfide bond</keyword>
<keyword id="KW-0297">G-protein coupled receptor</keyword>
<keyword id="KW-0325">Glycoprotein</keyword>
<keyword id="KW-0472">Membrane</keyword>
<keyword id="KW-0597">Phosphoprotein</keyword>
<keyword id="KW-0628">Postsynaptic cell membrane</keyword>
<keyword id="KW-0675">Receptor</keyword>
<keyword id="KW-1185">Reference proteome</keyword>
<keyword id="KW-0770">Synapse</keyword>
<keyword id="KW-0807">Transducer</keyword>
<keyword id="KW-0812">Transmembrane</keyword>
<keyword id="KW-1133">Transmembrane helix</keyword>
<name>ACM3_CHICK</name>
<evidence type="ECO:0000250" key="1"/>
<evidence type="ECO:0000250" key="2">
    <source>
        <dbReference type="UniProtKB" id="P20309"/>
    </source>
</evidence>
<evidence type="ECO:0000255" key="3"/>
<evidence type="ECO:0000255" key="4">
    <source>
        <dbReference type="PROSITE-ProRule" id="PRU00521"/>
    </source>
</evidence>
<evidence type="ECO:0000256" key="5">
    <source>
        <dbReference type="SAM" id="MobiDB-lite"/>
    </source>
</evidence>
<accession>P49578</accession>
<dbReference type="EMBL" id="L10617">
    <property type="protein sequence ID" value="AAA65961.1"/>
    <property type="molecule type" value="mRNA"/>
</dbReference>
<dbReference type="PIR" id="A55019">
    <property type="entry name" value="A55019"/>
</dbReference>
<dbReference type="RefSeq" id="NP_990730.1">
    <property type="nucleotide sequence ID" value="NM_205399.1"/>
</dbReference>
<dbReference type="SMR" id="P49578"/>
<dbReference type="FunCoup" id="P49578">
    <property type="interactions" value="409"/>
</dbReference>
<dbReference type="STRING" id="9031.ENSGALP00000017509"/>
<dbReference type="GlyCosmos" id="P49578">
    <property type="glycosylation" value="6 sites, No reported glycans"/>
</dbReference>
<dbReference type="GlyGen" id="P49578">
    <property type="glycosylation" value="6 sites"/>
</dbReference>
<dbReference type="PaxDb" id="9031-ENSGALP00000017509"/>
<dbReference type="GeneID" id="396364"/>
<dbReference type="KEGG" id="gga:396364"/>
<dbReference type="CTD" id="1131"/>
<dbReference type="VEuPathDB" id="HostDB:geneid_396364"/>
<dbReference type="eggNOG" id="KOG4220">
    <property type="taxonomic scope" value="Eukaryota"/>
</dbReference>
<dbReference type="InParanoid" id="P49578"/>
<dbReference type="OrthoDB" id="10071887at2759"/>
<dbReference type="PhylomeDB" id="P49578"/>
<dbReference type="PRO" id="PR:P49578"/>
<dbReference type="Proteomes" id="UP000000539">
    <property type="component" value="Unassembled WGS sequence"/>
</dbReference>
<dbReference type="GO" id="GO:0005886">
    <property type="term" value="C:plasma membrane"/>
    <property type="evidence" value="ECO:0000250"/>
    <property type="project" value="UniProtKB"/>
</dbReference>
<dbReference type="GO" id="GO:0045211">
    <property type="term" value="C:postsynaptic membrane"/>
    <property type="evidence" value="ECO:0007669"/>
    <property type="project" value="UniProtKB-SubCell"/>
</dbReference>
<dbReference type="GO" id="GO:0016907">
    <property type="term" value="F:G protein-coupled acetylcholine receptor activity"/>
    <property type="evidence" value="ECO:0007669"/>
    <property type="project" value="InterPro"/>
</dbReference>
<dbReference type="GO" id="GO:0004930">
    <property type="term" value="F:G protein-coupled receptor activity"/>
    <property type="evidence" value="ECO:0000318"/>
    <property type="project" value="GO_Central"/>
</dbReference>
<dbReference type="GO" id="GO:0071880">
    <property type="term" value="P:adenylate cyclase-activating adrenergic receptor signaling pathway"/>
    <property type="evidence" value="ECO:0000318"/>
    <property type="project" value="GO_Central"/>
</dbReference>
<dbReference type="GO" id="GO:0043410">
    <property type="term" value="P:positive regulation of MAPK cascade"/>
    <property type="evidence" value="ECO:0000318"/>
    <property type="project" value="GO_Central"/>
</dbReference>
<dbReference type="GO" id="GO:0045987">
    <property type="term" value="P:positive regulation of smooth muscle contraction"/>
    <property type="evidence" value="ECO:0007669"/>
    <property type="project" value="InterPro"/>
</dbReference>
<dbReference type="GO" id="GO:0046541">
    <property type="term" value="P:saliva secretion"/>
    <property type="evidence" value="ECO:0007669"/>
    <property type="project" value="InterPro"/>
</dbReference>
<dbReference type="CDD" id="cd15299">
    <property type="entry name" value="7tmA_mAChR_M3"/>
    <property type="match status" value="1"/>
</dbReference>
<dbReference type="FunFam" id="1.20.1070.10:FF:000047">
    <property type="entry name" value="Muscarinic acetylcholine receptor"/>
    <property type="match status" value="1"/>
</dbReference>
<dbReference type="FunFam" id="1.20.1070.10:FF:000103">
    <property type="entry name" value="Muscarinic acetylcholine receptor"/>
    <property type="match status" value="1"/>
</dbReference>
<dbReference type="Gene3D" id="1.20.1070.10">
    <property type="entry name" value="Rhodopsin 7-helix transmembrane proteins"/>
    <property type="match status" value="2"/>
</dbReference>
<dbReference type="InterPro" id="IPR000276">
    <property type="entry name" value="GPCR_Rhodpsn"/>
</dbReference>
<dbReference type="InterPro" id="IPR017452">
    <property type="entry name" value="GPCR_Rhodpsn_7TM"/>
</dbReference>
<dbReference type="InterPro" id="IPR001183">
    <property type="entry name" value="Musac_Ach_M3_rcpt"/>
</dbReference>
<dbReference type="InterPro" id="IPR000995">
    <property type="entry name" value="Musac_Ach_rcpt"/>
</dbReference>
<dbReference type="PANTHER" id="PTHR24247">
    <property type="entry name" value="5-HYDROXYTRYPTAMINE RECEPTOR"/>
    <property type="match status" value="1"/>
</dbReference>
<dbReference type="PANTHER" id="PTHR24247:SF183">
    <property type="entry name" value="MUSCARINIC ACETYLCHOLINE RECEPTOR M3"/>
    <property type="match status" value="1"/>
</dbReference>
<dbReference type="Pfam" id="PF00001">
    <property type="entry name" value="7tm_1"/>
    <property type="match status" value="1"/>
</dbReference>
<dbReference type="PRINTS" id="PR00237">
    <property type="entry name" value="GPCRRHODOPSN"/>
</dbReference>
<dbReference type="PRINTS" id="PR00243">
    <property type="entry name" value="MUSCARINICR"/>
</dbReference>
<dbReference type="PRINTS" id="PR00540">
    <property type="entry name" value="MUSCRINICM3R"/>
</dbReference>
<dbReference type="SMART" id="SM01381">
    <property type="entry name" value="7TM_GPCR_Srsx"/>
    <property type="match status" value="1"/>
</dbReference>
<dbReference type="SUPFAM" id="SSF81321">
    <property type="entry name" value="Family A G protein-coupled receptor-like"/>
    <property type="match status" value="1"/>
</dbReference>
<dbReference type="PROSITE" id="PS00237">
    <property type="entry name" value="G_PROTEIN_RECEP_F1_1"/>
    <property type="match status" value="1"/>
</dbReference>
<dbReference type="PROSITE" id="PS50262">
    <property type="entry name" value="G_PROTEIN_RECEP_F1_2"/>
    <property type="match status" value="1"/>
</dbReference>
<protein>
    <recommendedName>
        <fullName>Muscarinic acetylcholine receptor M3</fullName>
    </recommendedName>
</protein>
<feature type="chain" id="PRO_0000069035" description="Muscarinic acetylcholine receptor M3">
    <location>
        <begin position="1"/>
        <end position="639"/>
    </location>
</feature>
<feature type="topological domain" description="Extracellular" evidence="1">
    <location>
        <begin position="1"/>
        <end position="115"/>
    </location>
</feature>
<feature type="transmembrane region" description="Helical; Name=1" evidence="1">
    <location>
        <begin position="116"/>
        <end position="139"/>
    </location>
</feature>
<feature type="topological domain" description="Cytoplasmic" evidence="1">
    <location>
        <begin position="140"/>
        <end position="152"/>
    </location>
</feature>
<feature type="transmembrane region" description="Helical; Name=2" evidence="1">
    <location>
        <begin position="153"/>
        <end position="173"/>
    </location>
</feature>
<feature type="topological domain" description="Extracellular" evidence="1">
    <location>
        <begin position="174"/>
        <end position="190"/>
    </location>
</feature>
<feature type="transmembrane region" description="Helical; Name=3" evidence="1">
    <location>
        <begin position="191"/>
        <end position="212"/>
    </location>
</feature>
<feature type="topological domain" description="Cytoplasmic" evidence="1">
    <location>
        <begin position="213"/>
        <end position="232"/>
    </location>
</feature>
<feature type="transmembrane region" description="Helical; Name=4" evidence="1">
    <location>
        <begin position="233"/>
        <end position="255"/>
    </location>
</feature>
<feature type="topological domain" description="Extracellular" evidence="1">
    <location>
        <begin position="256"/>
        <end position="277"/>
    </location>
</feature>
<feature type="transmembrane region" description="Helical; Name=5" evidence="1">
    <location>
        <begin position="278"/>
        <end position="300"/>
    </location>
</feature>
<feature type="topological domain" description="Cytoplasmic" evidence="1">
    <location>
        <begin position="301"/>
        <end position="542"/>
    </location>
</feature>
<feature type="transmembrane region" description="Helical; Name=6" evidence="1">
    <location>
        <begin position="543"/>
        <end position="563"/>
    </location>
</feature>
<feature type="topological domain" description="Extracellular" evidence="1">
    <location>
        <begin position="564"/>
        <end position="576"/>
    </location>
</feature>
<feature type="transmembrane region" description="Helical; Name=7" evidence="1">
    <location>
        <begin position="577"/>
        <end position="596"/>
    </location>
</feature>
<feature type="topological domain" description="Cytoplasmic" evidence="1">
    <location>
        <begin position="597"/>
        <end position="639"/>
    </location>
</feature>
<feature type="region of interest" description="Disordered" evidence="5">
    <location>
        <begin position="370"/>
        <end position="404"/>
    </location>
</feature>
<feature type="region of interest" description="Disordered" evidence="5">
    <location>
        <begin position="431"/>
        <end position="471"/>
    </location>
</feature>
<feature type="compositionally biased region" description="Low complexity" evidence="5">
    <location>
        <begin position="382"/>
        <end position="393"/>
    </location>
</feature>
<feature type="compositionally biased region" description="Basic and acidic residues" evidence="5">
    <location>
        <begin position="443"/>
        <end position="454"/>
    </location>
</feature>
<feature type="glycosylation site" description="N-linked (GlcNAc...) asparagine" evidence="3">
    <location>
        <position position="16"/>
    </location>
</feature>
<feature type="glycosylation site" description="N-linked (GlcNAc...) asparagine" evidence="3">
    <location>
        <position position="44"/>
    </location>
</feature>
<feature type="glycosylation site" description="N-linked (GlcNAc...) asparagine" evidence="3">
    <location>
        <position position="45"/>
    </location>
</feature>
<feature type="glycosylation site" description="N-linked (GlcNAc...) asparagine" evidence="3">
    <location>
        <position position="54"/>
    </location>
</feature>
<feature type="glycosylation site" description="N-linked (GlcNAc...) asparagine" evidence="3">
    <location>
        <position position="97"/>
    </location>
</feature>
<feature type="glycosylation site" description="N-linked (GlcNAc...) asparagine" evidence="3">
    <location>
        <position position="101"/>
    </location>
</feature>
<feature type="disulfide bond" evidence="4">
    <location>
        <begin position="189"/>
        <end position="269"/>
    </location>
</feature>
<reference key="1">
    <citation type="journal article" date="1994" name="J. Biol. Chem.">
        <title>A novel M3 muscarinic acetylcholine receptor is expressed in chick atrium and ventricle.</title>
        <authorList>
            <person name="Gadbut A.P."/>
            <person name="Galper J.B."/>
        </authorList>
    </citation>
    <scope>NUCLEOTIDE SEQUENCE [MRNA]</scope>
    <source>
        <tissue>Brain</tissue>
    </source>
</reference>
<sequence>MLTHYQLCFQKRSSQNYTVPDPTSCFDVPPWTILCQRATMIMHNNSSALPLFSNVSSFWKRDSHGPGLLDEGASLIGSYDSPETTESFPFSTVETTNSSLNATIKDPLGGHAVWQVVLIAFLTGIIALVTIIGNILVIVSFKVNKQLKTVNNYFLLSLACADLIIGVISMNLFTTYIIMGHWALGNLACDLWLSIDYVASNASVMNLLVISFDRYFSITRPLTYRAKRTTKRAGVMIGLAWIISFVLWAPAILFWQYFVGKRTVPLDECFIQFLSEPIITFGTAIAAFYLPVTIMSILYWRIYKETEKRTKELAGLQASGSEAETARFVHQTGSSRSLSSYELQRQSTKRSSRRKYRRCHFWLTMKSWEPNTDQGDQEHSSSDSWNNNDAAASLENSASSDEEDITAETRAIYSIVLKLPGHSAILNSTKLPSSEDLNESADELQKSDTDSQEKKPKKLQPPKSIQDGGSFQKSFSKLPIQPGSAETATASDGISSVTKTSAALPLSFKEATLAKKFALKTRSQITKRKRMSLIKEKKAAQTLSAILFAFIITWTPYNIMVLVNTFCDCVPKTVWNLGYWLCYINSTVNPVCYALCNKMFRNTFKMLLLCQCDKRKRRKQQYQQRQSVIFHKRIPREAS</sequence>
<gene>
    <name type="primary">CHRM3</name>
</gene>